<gene>
    <name type="primary">Cga</name>
</gene>
<sequence>MDYYRKYAAVILVMLSMFLHILHSLPDGDFIIQGCPECKLKENKYFSKLGAPIYQCMGCCFSRAYPTPARSKKTMLVPKNITSEATCCVAKAFTKATVMGNARVENHTECHCSTCYYHKS</sequence>
<comment type="function">
    <text evidence="1">Shared alpha chain of the active heterodimeric glycoprotein hormones thyrotropin/thyroid stimulating hormone/TSH, lutropin/luteinizing hormone/LH and follitropin/follicle stimulating hormone/FSH. These hormones bind specific receptors on target cells that in turn activate downstream signaling pathways.</text>
</comment>
<comment type="subunit">
    <text evidence="1">Heterodimer. The active hormones thyrotropin, lutropin and follitropin are heterodimers composed of CGA, a common alpha chain described here and a unique beta chain which confers their biological specificity to the hormones: TSHB for thyrotropin, LHB for lutropin and FSHB for follitropin.</text>
</comment>
<comment type="subcellular location">
    <subcellularLocation>
        <location evidence="1">Secreted</location>
    </subcellularLocation>
</comment>
<comment type="developmental stage">
    <text evidence="2">Expressed in the ventral area of the anterior pituitary gland from 13.5 dpc onwards, expression remains at 18.5 dpc.</text>
</comment>
<comment type="similarity">
    <text evidence="3">Belongs to the glycoprotein hormones subunit alpha family.</text>
</comment>
<comment type="caution">
    <text evidence="3">PubMed:6177696 sequence was originally thought to originate from rat.</text>
</comment>
<organism>
    <name type="scientific">Mus musculus</name>
    <name type="common">Mouse</name>
    <dbReference type="NCBI Taxonomy" id="10090"/>
    <lineage>
        <taxon>Eukaryota</taxon>
        <taxon>Metazoa</taxon>
        <taxon>Chordata</taxon>
        <taxon>Craniata</taxon>
        <taxon>Vertebrata</taxon>
        <taxon>Euteleostomi</taxon>
        <taxon>Mammalia</taxon>
        <taxon>Eutheria</taxon>
        <taxon>Euarchontoglires</taxon>
        <taxon>Glires</taxon>
        <taxon>Rodentia</taxon>
        <taxon>Myomorpha</taxon>
        <taxon>Muroidea</taxon>
        <taxon>Muridae</taxon>
        <taxon>Murinae</taxon>
        <taxon>Mus</taxon>
        <taxon>Mus</taxon>
    </lineage>
</organism>
<evidence type="ECO:0000250" key="1">
    <source>
        <dbReference type="UniProtKB" id="P01215"/>
    </source>
</evidence>
<evidence type="ECO:0000269" key="2">
    <source>
    </source>
</evidence>
<evidence type="ECO:0000305" key="3"/>
<keyword id="KW-1015">Disulfide bond</keyword>
<keyword id="KW-0325">Glycoprotein</keyword>
<keyword id="KW-0372">Hormone</keyword>
<keyword id="KW-1185">Reference proteome</keyword>
<keyword id="KW-0964">Secreted</keyword>
<keyword id="KW-0732">Signal</keyword>
<proteinExistence type="evidence at transcript level"/>
<protein>
    <recommendedName>
        <fullName>Glycoprotein hormones alpha chain</fullName>
    </recommendedName>
    <alternativeName>
        <fullName>Anterior pituitary glycoprotein hormones common subunit alpha</fullName>
    </alternativeName>
    <alternativeName>
        <fullName>Follicle-stimulating hormone alpha chain</fullName>
        <shortName>FSH-alpha</shortName>
    </alternativeName>
    <alternativeName>
        <fullName>Follitropin alpha chain</fullName>
    </alternativeName>
    <alternativeName>
        <fullName>Luteinizing hormone alpha chain</fullName>
        <shortName>LSH-alpha</shortName>
    </alternativeName>
    <alternativeName>
        <fullName>Lutropin alpha chain</fullName>
    </alternativeName>
    <alternativeName>
        <fullName>Thyroid-stimulating hormone alpha chain</fullName>
        <shortName>TSH-alpha</shortName>
    </alternativeName>
    <alternativeName>
        <fullName>Thyrotropin alpha chain</fullName>
    </alternativeName>
</protein>
<dbReference type="EMBL" id="J00643">
    <property type="protein sequence ID" value="AAA96700.1"/>
    <property type="molecule type" value="mRNA"/>
</dbReference>
<dbReference type="EMBL" id="V01253">
    <property type="protein sequence ID" value="CAA24566.1"/>
    <property type="molecule type" value="mRNA"/>
</dbReference>
<dbReference type="EMBL" id="M22991">
    <property type="status" value="NOT_ANNOTATED_CDS"/>
    <property type="molecule type" value="Genomic_DNA"/>
</dbReference>
<dbReference type="EMBL" id="M22992">
    <property type="protein sequence ID" value="AAA99228.1"/>
    <property type="molecule type" value="Genomic_DNA"/>
</dbReference>
<dbReference type="EMBL" id="AF307151">
    <property type="protein sequence ID" value="AAG30279.1"/>
    <property type="molecule type" value="mRNA"/>
</dbReference>
<dbReference type="EMBL" id="BC087926">
    <property type="protein sequence ID" value="AAH87926.1"/>
    <property type="molecule type" value="mRNA"/>
</dbReference>
<dbReference type="CCDS" id="CCDS18035.1"/>
<dbReference type="PIR" id="A31598">
    <property type="entry name" value="TTMSA"/>
</dbReference>
<dbReference type="RefSeq" id="NP_034019.1">
    <property type="nucleotide sequence ID" value="NM_009889.2"/>
</dbReference>
<dbReference type="RefSeq" id="XP_006537649.1">
    <property type="nucleotide sequence ID" value="XM_006537586.2"/>
</dbReference>
<dbReference type="SMR" id="P01216"/>
<dbReference type="FunCoup" id="P01216">
    <property type="interactions" value="669"/>
</dbReference>
<dbReference type="STRING" id="10090.ENSMUSP00000029975"/>
<dbReference type="GlyCosmos" id="P01216">
    <property type="glycosylation" value="2 sites, No reported glycans"/>
</dbReference>
<dbReference type="GlyGen" id="P01216">
    <property type="glycosylation" value="3 sites, 2 N-linked glycans (2 sites)"/>
</dbReference>
<dbReference type="iPTMnet" id="P01216"/>
<dbReference type="PhosphoSitePlus" id="P01216"/>
<dbReference type="PaxDb" id="10090-ENSMUSP00000029975"/>
<dbReference type="PeptideAtlas" id="P01216"/>
<dbReference type="ProteomicsDB" id="268832"/>
<dbReference type="Antibodypedia" id="18627">
    <property type="antibodies" value="1537 antibodies from 40 providers"/>
</dbReference>
<dbReference type="DNASU" id="12640"/>
<dbReference type="Ensembl" id="ENSMUST00000029975.10">
    <property type="protein sequence ID" value="ENSMUSP00000029975.4"/>
    <property type="gene ID" value="ENSMUSG00000028298.11"/>
</dbReference>
<dbReference type="Ensembl" id="ENSMUST00000108130.2">
    <property type="protein sequence ID" value="ENSMUSP00000103765.2"/>
    <property type="gene ID" value="ENSMUSG00000028298.11"/>
</dbReference>
<dbReference type="GeneID" id="12640"/>
<dbReference type="KEGG" id="mmu:12640"/>
<dbReference type="UCSC" id="uc008sgq.1">
    <property type="organism name" value="mouse"/>
</dbReference>
<dbReference type="AGR" id="MGI:88390"/>
<dbReference type="CTD" id="1081"/>
<dbReference type="MGI" id="MGI:88390">
    <property type="gene designation" value="Cga"/>
</dbReference>
<dbReference type="VEuPathDB" id="HostDB:ENSMUSG00000028298"/>
<dbReference type="eggNOG" id="ENOG502S1PK">
    <property type="taxonomic scope" value="Eukaryota"/>
</dbReference>
<dbReference type="GeneTree" id="ENSGT00390000012242"/>
<dbReference type="HOGENOM" id="CLU_148106_0_0_1"/>
<dbReference type="InParanoid" id="P01216"/>
<dbReference type="OMA" id="VKNHTDC"/>
<dbReference type="OrthoDB" id="9852859at2759"/>
<dbReference type="PhylomeDB" id="P01216"/>
<dbReference type="TreeFam" id="TF332733"/>
<dbReference type="Reactome" id="R-MMU-193048">
    <property type="pathway name" value="Androgen biosynthesis"/>
</dbReference>
<dbReference type="Reactome" id="R-MMU-193993">
    <property type="pathway name" value="Mineralocorticoid biosynthesis"/>
</dbReference>
<dbReference type="Reactome" id="R-MMU-209822">
    <property type="pathway name" value="Glycoprotein hormones"/>
</dbReference>
<dbReference type="Reactome" id="R-MMU-209968">
    <property type="pathway name" value="Thyroxine biosynthesis"/>
</dbReference>
<dbReference type="Reactome" id="R-MMU-375281">
    <property type="pathway name" value="Hormone ligand-binding receptors"/>
</dbReference>
<dbReference type="Reactome" id="R-MMU-418555">
    <property type="pathway name" value="G alpha (s) signalling events"/>
</dbReference>
<dbReference type="Reactome" id="R-MMU-8866910">
    <property type="pathway name" value="TFAP2 (AP-2) family regulates transcription of growth factors and their receptors"/>
</dbReference>
<dbReference type="Reactome" id="R-MMU-975578">
    <property type="pathway name" value="Reactions specific to the complex N-glycan synthesis pathway"/>
</dbReference>
<dbReference type="BioGRID-ORCS" id="12640">
    <property type="hits" value="4 hits in 81 CRISPR screens"/>
</dbReference>
<dbReference type="ChiTaRS" id="Chga">
    <property type="organism name" value="mouse"/>
</dbReference>
<dbReference type="PRO" id="PR:P01216"/>
<dbReference type="Proteomes" id="UP000000589">
    <property type="component" value="Chromosome 4"/>
</dbReference>
<dbReference type="RNAct" id="P01216">
    <property type="molecule type" value="protein"/>
</dbReference>
<dbReference type="Bgee" id="ENSMUSG00000028298">
    <property type="expression patterns" value="Expressed in pituitary gland and 25 other cell types or tissues"/>
</dbReference>
<dbReference type="ExpressionAtlas" id="P01216">
    <property type="expression patterns" value="baseline and differential"/>
</dbReference>
<dbReference type="GO" id="GO:0005615">
    <property type="term" value="C:extracellular space"/>
    <property type="evidence" value="ECO:0000250"/>
    <property type="project" value="UniProtKB"/>
</dbReference>
<dbReference type="GO" id="GO:0016914">
    <property type="term" value="C:follicle-stimulating hormone complex"/>
    <property type="evidence" value="ECO:0000250"/>
    <property type="project" value="UniProtKB"/>
</dbReference>
<dbReference type="GO" id="GO:0016913">
    <property type="term" value="F:follicle-stimulating hormone activity"/>
    <property type="evidence" value="ECO:0000250"/>
    <property type="project" value="UniProtKB"/>
</dbReference>
<dbReference type="GO" id="GO:0032870">
    <property type="term" value="P:cellular response to hormone stimulus"/>
    <property type="evidence" value="ECO:0000315"/>
    <property type="project" value="MGI"/>
</dbReference>
<dbReference type="GO" id="GO:0048589">
    <property type="term" value="P:developmental growth"/>
    <property type="evidence" value="ECO:0000315"/>
    <property type="project" value="MGI"/>
</dbReference>
<dbReference type="GO" id="GO:0046884">
    <property type="term" value="P:follicle-stimulating hormone secretion"/>
    <property type="evidence" value="ECO:0000315"/>
    <property type="project" value="MGI"/>
</dbReference>
<dbReference type="GO" id="GO:0007186">
    <property type="term" value="P:G protein-coupled receptor signaling pathway"/>
    <property type="evidence" value="ECO:0000250"/>
    <property type="project" value="UniProtKB"/>
</dbReference>
<dbReference type="GO" id="GO:0008406">
    <property type="term" value="P:gonad development"/>
    <property type="evidence" value="ECO:0000315"/>
    <property type="project" value="MGI"/>
</dbReference>
<dbReference type="GO" id="GO:0032275">
    <property type="term" value="P:luteinizing hormone secretion"/>
    <property type="evidence" value="ECO:0000315"/>
    <property type="project" value="MGI"/>
</dbReference>
<dbReference type="GO" id="GO:0046621">
    <property type="term" value="P:negative regulation of organ growth"/>
    <property type="evidence" value="ECO:0000315"/>
    <property type="project" value="MGI"/>
</dbReference>
<dbReference type="GO" id="GO:0035265">
    <property type="term" value="P:organ growth"/>
    <property type="evidence" value="ECO:0000315"/>
    <property type="project" value="MGI"/>
</dbReference>
<dbReference type="GO" id="GO:0010893">
    <property type="term" value="P:positive regulation of steroid biosynthetic process"/>
    <property type="evidence" value="ECO:0000250"/>
    <property type="project" value="UniProtKB"/>
</dbReference>
<dbReference type="GO" id="GO:0010469">
    <property type="term" value="P:regulation of signaling receptor activity"/>
    <property type="evidence" value="ECO:0000250"/>
    <property type="project" value="UniProtKB"/>
</dbReference>
<dbReference type="GO" id="GO:0030878">
    <property type="term" value="P:thyroid gland development"/>
    <property type="evidence" value="ECO:0000315"/>
    <property type="project" value="MGI"/>
</dbReference>
<dbReference type="GO" id="GO:0006590">
    <property type="term" value="P:thyroid hormone generation"/>
    <property type="evidence" value="ECO:0000315"/>
    <property type="project" value="MGI"/>
</dbReference>
<dbReference type="FunFam" id="2.10.90.10:FF:000011">
    <property type="entry name" value="Glycoprotein hormones alpha chain"/>
    <property type="match status" value="1"/>
</dbReference>
<dbReference type="Gene3D" id="2.10.90.10">
    <property type="entry name" value="Cystine-knot cytokines"/>
    <property type="match status" value="1"/>
</dbReference>
<dbReference type="InterPro" id="IPR029034">
    <property type="entry name" value="Cystine-knot_cytokine"/>
</dbReference>
<dbReference type="InterPro" id="IPR000476">
    <property type="entry name" value="Glyco_hormone"/>
</dbReference>
<dbReference type="PANTHER" id="PTHR11509">
    <property type="entry name" value="GLYCOPROTEIN HORMONE ALPHA CHAIN"/>
    <property type="match status" value="1"/>
</dbReference>
<dbReference type="PANTHER" id="PTHR11509:SF0">
    <property type="entry name" value="GLYCOPROTEIN HORMONES ALPHA CHAIN"/>
    <property type="match status" value="1"/>
</dbReference>
<dbReference type="Pfam" id="PF00236">
    <property type="entry name" value="Hormone_6"/>
    <property type="match status" value="1"/>
</dbReference>
<dbReference type="PRINTS" id="PR00274">
    <property type="entry name" value="GLYCOHORMONE"/>
</dbReference>
<dbReference type="SMART" id="SM00067">
    <property type="entry name" value="GHA"/>
    <property type="match status" value="1"/>
</dbReference>
<dbReference type="SUPFAM" id="SSF57501">
    <property type="entry name" value="Cystine-knot cytokines"/>
    <property type="match status" value="1"/>
</dbReference>
<dbReference type="PROSITE" id="PS00779">
    <property type="entry name" value="GLYCO_HORMONE_ALPHA_1"/>
    <property type="match status" value="1"/>
</dbReference>
<dbReference type="PROSITE" id="PS00780">
    <property type="entry name" value="GLYCO_HORMONE_ALPHA_2"/>
    <property type="match status" value="1"/>
</dbReference>
<dbReference type="PROSITE" id="PS50277">
    <property type="entry name" value="GLYCO_HORMONE_ALPHA_3"/>
    <property type="match status" value="1"/>
</dbReference>
<feature type="signal peptide">
    <location>
        <begin position="1"/>
        <end position="24"/>
    </location>
</feature>
<feature type="chain" id="PRO_0000011648" description="Glycoprotein hormones alpha chain">
    <location>
        <begin position="25"/>
        <end position="120"/>
    </location>
</feature>
<feature type="glycosylation site" description="N-linked (GlcNAc...) asparagine" evidence="1">
    <location>
        <position position="80"/>
    </location>
</feature>
<feature type="glycosylation site" description="N-linked (GlcNAc...) asparagine" evidence="1">
    <location>
        <position position="106"/>
    </location>
</feature>
<feature type="disulfide bond" evidence="1">
    <location>
        <begin position="35"/>
        <end position="59"/>
    </location>
</feature>
<feature type="disulfide bond" evidence="1">
    <location>
        <begin position="38"/>
        <end position="88"/>
    </location>
</feature>
<feature type="disulfide bond" evidence="1">
    <location>
        <begin position="56"/>
        <end position="110"/>
    </location>
</feature>
<feature type="disulfide bond" evidence="1">
    <location>
        <begin position="60"/>
        <end position="112"/>
    </location>
</feature>
<feature type="disulfide bond" evidence="1">
    <location>
        <begin position="87"/>
        <end position="115"/>
    </location>
</feature>
<feature type="sequence conflict" description="In Ref. 2; CAA24566." evidence="3" ref="2">
    <original>RK</original>
    <variation>KR</variation>
    <location>
        <begin position="5"/>
        <end position="6"/>
    </location>
</feature>
<accession>P01216</accession>
<accession>P11963</accession>
<accession>Q5M8P4</accession>
<name>GLHA_MOUSE</name>
<reference key="1">
    <citation type="journal article" date="1981" name="Proc. Natl. Acad. Sci. U.S.A.">
        <title>Nucleotide sequence of the mRNA encoding the pre-alpha-subunit of mouse thyrotropin.</title>
        <authorList>
            <person name="Chin W.W."/>
            <person name="Kronenberg H.M."/>
            <person name="Dee P.C."/>
            <person name="Maloof F."/>
            <person name="Habener J.F."/>
        </authorList>
    </citation>
    <scope>NUCLEOTIDE SEQUENCE [MRNA]</scope>
</reference>
<reference key="2">
    <citation type="journal article" date="1982" name="J. Biol. Chem.">
        <title>Alpha subunit of rat pituitary glycoprotein hormones. Primary structure of the precursor determined from the nucleotide sequence of cloned cDNAs.</title>
        <authorList>
            <person name="Godine J.E."/>
            <person name="Chin W.W."/>
            <person name="Habener J.F."/>
        </authorList>
    </citation>
    <scope>NUCLEOTIDE SEQUENCE [MRNA]</scope>
</reference>
<reference key="3">
    <citation type="journal article" date="1988" name="DNA">
        <title>Organization and nucleotide sequence of the mouse alpha-subunit gene of the pituitary glycoprotein hormones.</title>
        <authorList>
            <person name="Gordon D.F."/>
            <person name="Wood W.M."/>
            <person name="Ridgway E.C."/>
        </authorList>
    </citation>
    <scope>NUCLEOTIDE SEQUENCE [GENOMIC DNA]</scope>
</reference>
<reference key="4">
    <citation type="journal article" date="2002" name="Mol. Reprod. Dev.">
        <title>Comparison of glycoprotein hormone alpha-subunits of laboratory animals.</title>
        <authorList>
            <person name="Suzuki O."/>
            <person name="Mochida K."/>
            <person name="Yamamoto Y."/>
            <person name="Noguchi Y."/>
            <person name="Takano K."/>
            <person name="Matsuda J."/>
            <person name="Ogura A."/>
        </authorList>
    </citation>
    <scope>NUCLEOTIDE SEQUENCE [MRNA]</scope>
    <source>
        <strain>JF1</strain>
        <tissue>Pituitary</tissue>
    </source>
</reference>
<reference key="5">
    <citation type="journal article" date="2004" name="Genome Res.">
        <title>The status, quality, and expansion of the NIH full-length cDNA project: the Mammalian Gene Collection (MGC).</title>
        <authorList>
            <consortium name="The MGC Project Team"/>
        </authorList>
    </citation>
    <scope>NUCLEOTIDE SEQUENCE [LARGE SCALE MRNA]</scope>
    <source>
        <tissue>Pituitary</tissue>
    </source>
</reference>
<reference key="6">
    <citation type="journal article" date="2013" name="Mol. Endocrinol.">
        <title>Msx1 homeodomain protein represses the alphaGSU and GnRH receptor genes during gonadotrope development.</title>
        <authorList>
            <person name="Xie H."/>
            <person name="Cherrington B.D."/>
            <person name="Meadows J.D."/>
            <person name="Witham E.A."/>
            <person name="Mellon P.L."/>
        </authorList>
    </citation>
    <scope>DEVELOPMENTAL STAGE</scope>
</reference>